<name>MURQ_ALISL</name>
<keyword id="KW-0119">Carbohydrate metabolism</keyword>
<keyword id="KW-0456">Lyase</keyword>
<reference key="1">
    <citation type="journal article" date="2008" name="BMC Genomics">
        <title>The genome sequence of the fish pathogen Aliivibrio salmonicida strain LFI1238 shows extensive evidence of gene decay.</title>
        <authorList>
            <person name="Hjerde E."/>
            <person name="Lorentzen M.S."/>
            <person name="Holden M.T."/>
            <person name="Seeger K."/>
            <person name="Paulsen S."/>
            <person name="Bason N."/>
            <person name="Churcher C."/>
            <person name="Harris D."/>
            <person name="Norbertczak H."/>
            <person name="Quail M.A."/>
            <person name="Sanders S."/>
            <person name="Thurston S."/>
            <person name="Parkhill J."/>
            <person name="Willassen N.P."/>
            <person name="Thomson N.R."/>
        </authorList>
    </citation>
    <scope>NUCLEOTIDE SEQUENCE [LARGE SCALE GENOMIC DNA]</scope>
    <source>
        <strain>LFI1238</strain>
    </source>
</reference>
<feature type="chain" id="PRO_1000092300" description="N-acetylmuramic acid 6-phosphate etherase">
    <location>
        <begin position="1"/>
        <end position="300"/>
    </location>
</feature>
<feature type="domain" description="SIS" evidence="1">
    <location>
        <begin position="57"/>
        <end position="220"/>
    </location>
</feature>
<feature type="active site" description="Proton donor" evidence="1">
    <location>
        <position position="85"/>
    </location>
</feature>
<feature type="active site" evidence="1">
    <location>
        <position position="116"/>
    </location>
</feature>
<organism>
    <name type="scientific">Aliivibrio salmonicida (strain LFI1238)</name>
    <name type="common">Vibrio salmonicida (strain LFI1238)</name>
    <dbReference type="NCBI Taxonomy" id="316275"/>
    <lineage>
        <taxon>Bacteria</taxon>
        <taxon>Pseudomonadati</taxon>
        <taxon>Pseudomonadota</taxon>
        <taxon>Gammaproteobacteria</taxon>
        <taxon>Vibrionales</taxon>
        <taxon>Vibrionaceae</taxon>
        <taxon>Aliivibrio</taxon>
    </lineage>
</organism>
<comment type="function">
    <text evidence="1">Specifically catalyzes the cleavage of the D-lactyl ether substituent of MurNAc 6-phosphate, producing GlcNAc 6-phosphate and D-lactate. Together with AnmK, is also required for the utilization of anhydro-N-acetylmuramic acid (anhMurNAc) either imported from the medium or derived from its own cell wall murein, and thus plays a role in cell wall recycling.</text>
</comment>
<comment type="catalytic activity">
    <reaction evidence="1">
        <text>N-acetyl-D-muramate 6-phosphate + H2O = N-acetyl-D-glucosamine 6-phosphate + (R)-lactate</text>
        <dbReference type="Rhea" id="RHEA:26410"/>
        <dbReference type="ChEBI" id="CHEBI:15377"/>
        <dbReference type="ChEBI" id="CHEBI:16004"/>
        <dbReference type="ChEBI" id="CHEBI:57513"/>
        <dbReference type="ChEBI" id="CHEBI:58722"/>
        <dbReference type="EC" id="4.2.1.126"/>
    </reaction>
</comment>
<comment type="pathway">
    <text evidence="1">Amino-sugar metabolism; 1,6-anhydro-N-acetylmuramate degradation.</text>
</comment>
<comment type="pathway">
    <text evidence="1">Amino-sugar metabolism; N-acetylmuramate degradation.</text>
</comment>
<comment type="pathway">
    <text evidence="1">Cell wall biogenesis; peptidoglycan recycling.</text>
</comment>
<comment type="subunit">
    <text evidence="1">Homodimer.</text>
</comment>
<comment type="miscellaneous">
    <text evidence="1">A lyase-type mechanism (elimination/hydration) is suggested for the cleavage of the lactyl ether bond of MurNAc 6-phosphate, with the formation of an alpha,beta-unsaturated aldehyde intermediate with (E)-stereochemistry, followed by the syn addition of water to give product.</text>
</comment>
<comment type="similarity">
    <text evidence="1">Belongs to the GCKR-like family. MurNAc-6-P etherase subfamily.</text>
</comment>
<protein>
    <recommendedName>
        <fullName evidence="1">N-acetylmuramic acid 6-phosphate etherase</fullName>
        <shortName evidence="1">MurNAc-6-P etherase</shortName>
        <ecNumber evidence="1">4.2.1.126</ecNumber>
    </recommendedName>
    <alternativeName>
        <fullName evidence="1">N-acetylmuramic acid 6-phosphate hydrolase</fullName>
    </alternativeName>
    <alternativeName>
        <fullName evidence="1">N-acetylmuramic acid 6-phosphate lyase</fullName>
    </alternativeName>
</protein>
<dbReference type="EC" id="4.2.1.126" evidence="1"/>
<dbReference type="EMBL" id="FM178379">
    <property type="protein sequence ID" value="CAQ78945.1"/>
    <property type="molecule type" value="Genomic_DNA"/>
</dbReference>
<dbReference type="RefSeq" id="WP_012549985.1">
    <property type="nucleotide sequence ID" value="NC_011312.1"/>
</dbReference>
<dbReference type="SMR" id="B6EJZ8"/>
<dbReference type="KEGG" id="vsa:VSAL_I1260"/>
<dbReference type="eggNOG" id="COG2103">
    <property type="taxonomic scope" value="Bacteria"/>
</dbReference>
<dbReference type="HOGENOM" id="CLU_049049_1_1_6"/>
<dbReference type="UniPathway" id="UPA00342"/>
<dbReference type="UniPathway" id="UPA00343"/>
<dbReference type="UniPathway" id="UPA00544"/>
<dbReference type="Proteomes" id="UP000001730">
    <property type="component" value="Chromosome 1"/>
</dbReference>
<dbReference type="GO" id="GO:0097367">
    <property type="term" value="F:carbohydrate derivative binding"/>
    <property type="evidence" value="ECO:0007669"/>
    <property type="project" value="InterPro"/>
</dbReference>
<dbReference type="GO" id="GO:0016835">
    <property type="term" value="F:carbon-oxygen lyase activity"/>
    <property type="evidence" value="ECO:0007669"/>
    <property type="project" value="UniProtKB-UniRule"/>
</dbReference>
<dbReference type="GO" id="GO:0016803">
    <property type="term" value="F:ether hydrolase activity"/>
    <property type="evidence" value="ECO:0007669"/>
    <property type="project" value="TreeGrafter"/>
</dbReference>
<dbReference type="GO" id="GO:0097175">
    <property type="term" value="P:1,6-anhydro-N-acetyl-beta-muramic acid catabolic process"/>
    <property type="evidence" value="ECO:0007669"/>
    <property type="project" value="UniProtKB-UniRule"/>
</dbReference>
<dbReference type="GO" id="GO:0046348">
    <property type="term" value="P:amino sugar catabolic process"/>
    <property type="evidence" value="ECO:0007669"/>
    <property type="project" value="InterPro"/>
</dbReference>
<dbReference type="GO" id="GO:0097173">
    <property type="term" value="P:N-acetylmuramic acid catabolic process"/>
    <property type="evidence" value="ECO:0007669"/>
    <property type="project" value="UniProtKB-UniPathway"/>
</dbReference>
<dbReference type="GO" id="GO:0009254">
    <property type="term" value="P:peptidoglycan turnover"/>
    <property type="evidence" value="ECO:0007669"/>
    <property type="project" value="UniProtKB-UniRule"/>
</dbReference>
<dbReference type="CDD" id="cd05007">
    <property type="entry name" value="SIS_Etherase"/>
    <property type="match status" value="1"/>
</dbReference>
<dbReference type="FunFam" id="1.10.8.1080:FF:000001">
    <property type="entry name" value="N-acetylmuramic acid 6-phosphate etherase"/>
    <property type="match status" value="1"/>
</dbReference>
<dbReference type="FunFam" id="3.40.50.10490:FF:000014">
    <property type="entry name" value="N-acetylmuramic acid 6-phosphate etherase"/>
    <property type="match status" value="1"/>
</dbReference>
<dbReference type="Gene3D" id="1.10.8.1080">
    <property type="match status" value="1"/>
</dbReference>
<dbReference type="Gene3D" id="3.40.50.10490">
    <property type="entry name" value="Glucose-6-phosphate isomerase like protein, domain 1"/>
    <property type="match status" value="1"/>
</dbReference>
<dbReference type="HAMAP" id="MF_00068">
    <property type="entry name" value="MurQ"/>
    <property type="match status" value="1"/>
</dbReference>
<dbReference type="InterPro" id="IPR005488">
    <property type="entry name" value="Etherase_MurQ"/>
</dbReference>
<dbReference type="InterPro" id="IPR005486">
    <property type="entry name" value="Glucokinase_regulatory_CS"/>
</dbReference>
<dbReference type="InterPro" id="IPR040190">
    <property type="entry name" value="MURQ/GCKR"/>
</dbReference>
<dbReference type="InterPro" id="IPR001347">
    <property type="entry name" value="SIS_dom"/>
</dbReference>
<dbReference type="InterPro" id="IPR046348">
    <property type="entry name" value="SIS_dom_sf"/>
</dbReference>
<dbReference type="NCBIfam" id="TIGR00274">
    <property type="entry name" value="N-acetylmuramic acid 6-phosphate etherase"/>
    <property type="match status" value="1"/>
</dbReference>
<dbReference type="NCBIfam" id="NF003915">
    <property type="entry name" value="PRK05441.1"/>
    <property type="match status" value="1"/>
</dbReference>
<dbReference type="NCBIfam" id="NF009222">
    <property type="entry name" value="PRK12570.1"/>
    <property type="match status" value="1"/>
</dbReference>
<dbReference type="PANTHER" id="PTHR10088">
    <property type="entry name" value="GLUCOKINASE REGULATORY PROTEIN"/>
    <property type="match status" value="1"/>
</dbReference>
<dbReference type="PANTHER" id="PTHR10088:SF4">
    <property type="entry name" value="GLUCOKINASE REGULATORY PROTEIN"/>
    <property type="match status" value="1"/>
</dbReference>
<dbReference type="Pfam" id="PF22645">
    <property type="entry name" value="GKRP_SIS_N"/>
    <property type="match status" value="1"/>
</dbReference>
<dbReference type="SUPFAM" id="SSF53697">
    <property type="entry name" value="SIS domain"/>
    <property type="match status" value="1"/>
</dbReference>
<dbReference type="PROSITE" id="PS01272">
    <property type="entry name" value="GCKR"/>
    <property type="match status" value="1"/>
</dbReference>
<dbReference type="PROSITE" id="PS51464">
    <property type="entry name" value="SIS"/>
    <property type="match status" value="1"/>
</dbReference>
<evidence type="ECO:0000255" key="1">
    <source>
        <dbReference type="HAMAP-Rule" id="MF_00068"/>
    </source>
</evidence>
<gene>
    <name evidence="1" type="primary">murQ</name>
    <name type="ordered locus">VSAL_I1260</name>
</gene>
<sequence length="300" mass="31365">MKIDLTTLVTESRNQASEQIDVLSTVEMLTVINKEDQKVALAVEAILPQIAEVVDAIAVAFQCGGRLIYIGAGTSGRLGILDASECPPTYGSNPDLVVGLIAGGHKAILKAVENAEDNRELGASDLQDLGLNEKDVLVGIAASGRTPYVLGAMAYAKSVGATVATLSCNPNSPMTELADINMTPVVGPEIVTGSSRMKAGTAQKLVLNMLTTGAMIRTGKVFGNLMVDVEATNAKLVQRQKNIVIEATGCSETEAAESLSQCNNHCKTAILIVLSGLDAKSATDKLTEYNGFIRDALANS</sequence>
<accession>B6EJZ8</accession>
<proteinExistence type="inferred from homology"/>